<reference key="1">
    <citation type="journal article" date="2005" name="DNA Res.">
        <title>Complete nucleotide sequence of the chloroplast genome from the Tasmanian blue gum, Eucalyptus globulus (Myrtaceae).</title>
        <authorList>
            <person name="Steane D.A."/>
        </authorList>
    </citation>
    <scope>NUCLEOTIDE SEQUENCE [LARGE SCALE GENOMIC DNA]</scope>
</reference>
<proteinExistence type="inferred from homology"/>
<accession>Q49KY9</accession>
<evidence type="ECO:0000250" key="1"/>
<evidence type="ECO:0000255" key="2">
    <source>
        <dbReference type="HAMAP-Rule" id="MF_01395"/>
    </source>
</evidence>
<evidence type="ECO:0000255" key="3">
    <source>
        <dbReference type="PROSITE-ProRule" id="PRU01136"/>
    </source>
</evidence>
<name>ACCD_EUCGG</name>
<sequence>MEKWWFNSMLYKGKLEYRCGLSKSIDRFGNPIEKTSVSEDPVRNDTDKKIHSWSESSSYSNATHFVGVRDVRNFISDDTFLVRDSNRNIYSIYFDITNQIFEIDNDPSLLSERESSFFSYRTYAYLKNGSKNDDPPCDRSMYDTKYSWNNHITSCINSYLGSQICIESSILSSSDNSSDSYISSYIYGESRNSNERGSSSIRTSRNGIDFTRRENSTDFDLTQKYRHLWVQCENCYGLNYKKLLKSKMNICDQCGYHLKMSSSDRIELSIDPGTWDPMDEDMVSLDPIEFHSEEEPYKDRIDSYQRKTGLTDAVQTGTGRLNGIPIAIGVMDFQFMGGSMGSVVGEKITRLIEYATNQFLPLILVCASGGARMQEGSLSLMQMAKISAALYDYQSHKKLFYVSILTSPTTGGVTASFGMLGDIIIAEPNAYIAFAGKRVIEQTLNKIVPEGSQAAEYLFHKGLFDPIVPRNPLKGVLSELFKLHAFFPLN</sequence>
<keyword id="KW-0067">ATP-binding</keyword>
<keyword id="KW-0150">Chloroplast</keyword>
<keyword id="KW-0275">Fatty acid biosynthesis</keyword>
<keyword id="KW-0276">Fatty acid metabolism</keyword>
<keyword id="KW-0444">Lipid biosynthesis</keyword>
<keyword id="KW-0443">Lipid metabolism</keyword>
<keyword id="KW-0479">Metal-binding</keyword>
<keyword id="KW-0547">Nucleotide-binding</keyword>
<keyword id="KW-0934">Plastid</keyword>
<keyword id="KW-0808">Transferase</keyword>
<keyword id="KW-0862">Zinc</keyword>
<keyword id="KW-0863">Zinc-finger</keyword>
<organism>
    <name type="scientific">Eucalyptus globulus subsp. globulus</name>
    <name type="common">Tasmanian blue gum</name>
    <dbReference type="NCBI Taxonomy" id="71271"/>
    <lineage>
        <taxon>Eukaryota</taxon>
        <taxon>Viridiplantae</taxon>
        <taxon>Streptophyta</taxon>
        <taxon>Embryophyta</taxon>
        <taxon>Tracheophyta</taxon>
        <taxon>Spermatophyta</taxon>
        <taxon>Magnoliopsida</taxon>
        <taxon>eudicotyledons</taxon>
        <taxon>Gunneridae</taxon>
        <taxon>Pentapetalae</taxon>
        <taxon>rosids</taxon>
        <taxon>malvids</taxon>
        <taxon>Myrtales</taxon>
        <taxon>Myrtaceae</taxon>
        <taxon>Myrtoideae</taxon>
        <taxon>Eucalypteae</taxon>
        <taxon>Eucalyptus</taxon>
    </lineage>
</organism>
<gene>
    <name evidence="2" type="primary">accD</name>
</gene>
<geneLocation type="chloroplast"/>
<dbReference type="EC" id="2.1.3.15" evidence="2"/>
<dbReference type="EMBL" id="AY780259">
    <property type="protein sequence ID" value="AAX21038.1"/>
    <property type="molecule type" value="Genomic_DNA"/>
</dbReference>
<dbReference type="RefSeq" id="YP_636308.1">
    <property type="nucleotide sequence ID" value="NC_008115.1"/>
</dbReference>
<dbReference type="SMR" id="Q49KY9"/>
<dbReference type="GeneID" id="4108461"/>
<dbReference type="UniPathway" id="UPA00655">
    <property type="reaction ID" value="UER00711"/>
</dbReference>
<dbReference type="GO" id="GO:0009317">
    <property type="term" value="C:acetyl-CoA carboxylase complex"/>
    <property type="evidence" value="ECO:0007669"/>
    <property type="project" value="InterPro"/>
</dbReference>
<dbReference type="GO" id="GO:0009570">
    <property type="term" value="C:chloroplast stroma"/>
    <property type="evidence" value="ECO:0007669"/>
    <property type="project" value="UniProtKB-SubCell"/>
</dbReference>
<dbReference type="GO" id="GO:0003989">
    <property type="term" value="F:acetyl-CoA carboxylase activity"/>
    <property type="evidence" value="ECO:0007669"/>
    <property type="project" value="InterPro"/>
</dbReference>
<dbReference type="GO" id="GO:0005524">
    <property type="term" value="F:ATP binding"/>
    <property type="evidence" value="ECO:0007669"/>
    <property type="project" value="UniProtKB-KW"/>
</dbReference>
<dbReference type="GO" id="GO:0016743">
    <property type="term" value="F:carboxyl- or carbamoyltransferase activity"/>
    <property type="evidence" value="ECO:0007669"/>
    <property type="project" value="UniProtKB-UniRule"/>
</dbReference>
<dbReference type="GO" id="GO:0008270">
    <property type="term" value="F:zinc ion binding"/>
    <property type="evidence" value="ECO:0007669"/>
    <property type="project" value="UniProtKB-UniRule"/>
</dbReference>
<dbReference type="GO" id="GO:0006633">
    <property type="term" value="P:fatty acid biosynthetic process"/>
    <property type="evidence" value="ECO:0007669"/>
    <property type="project" value="UniProtKB-KW"/>
</dbReference>
<dbReference type="GO" id="GO:2001295">
    <property type="term" value="P:malonyl-CoA biosynthetic process"/>
    <property type="evidence" value="ECO:0007669"/>
    <property type="project" value="UniProtKB-UniRule"/>
</dbReference>
<dbReference type="Gene3D" id="3.90.226.10">
    <property type="entry name" value="2-enoyl-CoA Hydratase, Chain A, domain 1"/>
    <property type="match status" value="1"/>
</dbReference>
<dbReference type="HAMAP" id="MF_01395">
    <property type="entry name" value="AcetylCoA_CT_beta"/>
    <property type="match status" value="1"/>
</dbReference>
<dbReference type="InterPro" id="IPR034733">
    <property type="entry name" value="AcCoA_carboxyl_beta"/>
</dbReference>
<dbReference type="InterPro" id="IPR000438">
    <property type="entry name" value="Acetyl_CoA_COase_Trfase_b_su"/>
</dbReference>
<dbReference type="InterPro" id="IPR029045">
    <property type="entry name" value="ClpP/crotonase-like_dom_sf"/>
</dbReference>
<dbReference type="InterPro" id="IPR011762">
    <property type="entry name" value="COA_CT_N"/>
</dbReference>
<dbReference type="NCBIfam" id="TIGR00515">
    <property type="entry name" value="accD"/>
    <property type="match status" value="1"/>
</dbReference>
<dbReference type="PANTHER" id="PTHR42995">
    <property type="entry name" value="ACETYL-COENZYME A CARBOXYLASE CARBOXYL TRANSFERASE SUBUNIT BETA, CHLOROPLASTIC"/>
    <property type="match status" value="1"/>
</dbReference>
<dbReference type="PANTHER" id="PTHR42995:SF5">
    <property type="entry name" value="ACETYL-COENZYME A CARBOXYLASE CARBOXYL TRANSFERASE SUBUNIT BETA, CHLOROPLASTIC"/>
    <property type="match status" value="1"/>
</dbReference>
<dbReference type="Pfam" id="PF01039">
    <property type="entry name" value="Carboxyl_trans"/>
    <property type="match status" value="1"/>
</dbReference>
<dbReference type="PRINTS" id="PR01070">
    <property type="entry name" value="ACCCTRFRASEB"/>
</dbReference>
<dbReference type="SUPFAM" id="SSF52096">
    <property type="entry name" value="ClpP/crotonase"/>
    <property type="match status" value="1"/>
</dbReference>
<dbReference type="PROSITE" id="PS50980">
    <property type="entry name" value="COA_CT_NTER"/>
    <property type="match status" value="1"/>
</dbReference>
<protein>
    <recommendedName>
        <fullName evidence="2">Acetyl-coenzyme A carboxylase carboxyl transferase subunit beta, chloroplastic</fullName>
        <shortName evidence="2">ACCase subunit beta</shortName>
        <shortName evidence="2">Acetyl-CoA carboxylase carboxyltransferase subunit beta</shortName>
        <ecNumber evidence="2">2.1.3.15</ecNumber>
    </recommendedName>
</protein>
<comment type="function">
    <text evidence="2">Component of the acetyl coenzyme A carboxylase (ACC) complex. Biotin carboxylase (BC) catalyzes the carboxylation of biotin on its carrier protein (BCCP) and then the CO(2) group is transferred by the transcarboxylase to acetyl-CoA to form malonyl-CoA.</text>
</comment>
<comment type="catalytic activity">
    <reaction evidence="2">
        <text>N(6)-carboxybiotinyl-L-lysyl-[protein] + acetyl-CoA = N(6)-biotinyl-L-lysyl-[protein] + malonyl-CoA</text>
        <dbReference type="Rhea" id="RHEA:54728"/>
        <dbReference type="Rhea" id="RHEA-COMP:10505"/>
        <dbReference type="Rhea" id="RHEA-COMP:10506"/>
        <dbReference type="ChEBI" id="CHEBI:57288"/>
        <dbReference type="ChEBI" id="CHEBI:57384"/>
        <dbReference type="ChEBI" id="CHEBI:83144"/>
        <dbReference type="ChEBI" id="CHEBI:83145"/>
        <dbReference type="EC" id="2.1.3.15"/>
    </reaction>
</comment>
<comment type="cofactor">
    <cofactor evidence="2">
        <name>Zn(2+)</name>
        <dbReference type="ChEBI" id="CHEBI:29105"/>
    </cofactor>
    <text evidence="2">Binds 1 zinc ion per subunit.</text>
</comment>
<comment type="pathway">
    <text evidence="2">Lipid metabolism; malonyl-CoA biosynthesis; malonyl-CoA from acetyl-CoA: step 1/1.</text>
</comment>
<comment type="subunit">
    <text evidence="1">Acetyl-CoA carboxylase is a heterohexamer composed of biotin carboxyl carrier protein, biotin carboxylase and 2 subunits each of ACCase subunit alpha and ACCase plastid-coded subunit beta (accD).</text>
</comment>
<comment type="subcellular location">
    <subcellularLocation>
        <location evidence="2">Plastid</location>
        <location evidence="2">Chloroplast stroma</location>
    </subcellularLocation>
</comment>
<comment type="similarity">
    <text evidence="2">Belongs to the AccD/PCCB family.</text>
</comment>
<feature type="chain" id="PRO_0000359138" description="Acetyl-coenzyme A carboxylase carboxyl transferase subunit beta, chloroplastic">
    <location>
        <begin position="1"/>
        <end position="490"/>
    </location>
</feature>
<feature type="domain" description="CoA carboxyltransferase N-terminal" evidence="3">
    <location>
        <begin position="228"/>
        <end position="490"/>
    </location>
</feature>
<feature type="zinc finger region" description="C4-type" evidence="2">
    <location>
        <begin position="232"/>
        <end position="254"/>
    </location>
</feature>
<feature type="binding site" evidence="2">
    <location>
        <position position="232"/>
    </location>
    <ligand>
        <name>Zn(2+)</name>
        <dbReference type="ChEBI" id="CHEBI:29105"/>
    </ligand>
</feature>
<feature type="binding site" evidence="2">
    <location>
        <position position="235"/>
    </location>
    <ligand>
        <name>Zn(2+)</name>
        <dbReference type="ChEBI" id="CHEBI:29105"/>
    </ligand>
</feature>
<feature type="binding site" evidence="2">
    <location>
        <position position="251"/>
    </location>
    <ligand>
        <name>Zn(2+)</name>
        <dbReference type="ChEBI" id="CHEBI:29105"/>
    </ligand>
</feature>
<feature type="binding site" evidence="2">
    <location>
        <position position="254"/>
    </location>
    <ligand>
        <name>Zn(2+)</name>
        <dbReference type="ChEBI" id="CHEBI:29105"/>
    </ligand>
</feature>